<name>YIDD_COXBR</name>
<protein>
    <recommendedName>
        <fullName evidence="1">Putative membrane protein insertion efficiency factor</fullName>
    </recommendedName>
</protein>
<dbReference type="EMBL" id="CP000890">
    <property type="protein sequence ID" value="ABX77310.1"/>
    <property type="molecule type" value="Genomic_DNA"/>
</dbReference>
<dbReference type="KEGG" id="cbs:COXBURSA331_A2121"/>
<dbReference type="HOGENOM" id="CLU_144811_2_2_6"/>
<dbReference type="GO" id="GO:0005886">
    <property type="term" value="C:plasma membrane"/>
    <property type="evidence" value="ECO:0007669"/>
    <property type="project" value="UniProtKB-SubCell"/>
</dbReference>
<dbReference type="HAMAP" id="MF_00386">
    <property type="entry name" value="UPF0161_YidD"/>
    <property type="match status" value="1"/>
</dbReference>
<dbReference type="InterPro" id="IPR002696">
    <property type="entry name" value="Membr_insert_effic_factor_YidD"/>
</dbReference>
<dbReference type="NCBIfam" id="TIGR00278">
    <property type="entry name" value="membrane protein insertion efficiency factor YidD"/>
    <property type="match status" value="1"/>
</dbReference>
<dbReference type="PANTHER" id="PTHR33383">
    <property type="entry name" value="MEMBRANE PROTEIN INSERTION EFFICIENCY FACTOR-RELATED"/>
    <property type="match status" value="1"/>
</dbReference>
<dbReference type="PANTHER" id="PTHR33383:SF1">
    <property type="entry name" value="MEMBRANE PROTEIN INSERTION EFFICIENCY FACTOR-RELATED"/>
    <property type="match status" value="1"/>
</dbReference>
<dbReference type="Pfam" id="PF01809">
    <property type="entry name" value="YidD"/>
    <property type="match status" value="1"/>
</dbReference>
<dbReference type="SMART" id="SM01234">
    <property type="entry name" value="Haemolytic"/>
    <property type="match status" value="1"/>
</dbReference>
<keyword id="KW-0997">Cell inner membrane</keyword>
<keyword id="KW-1003">Cell membrane</keyword>
<keyword id="KW-0472">Membrane</keyword>
<proteinExistence type="inferred from homology"/>
<feature type="chain" id="PRO_1000080187" description="Putative membrane protein insertion efficiency factor">
    <location>
        <begin position="1"/>
        <end position="88"/>
    </location>
</feature>
<reference key="1">
    <citation type="submission" date="2007-11" db="EMBL/GenBank/DDBJ databases">
        <title>Genome sequencing of phylogenetically and phenotypically diverse Coxiella burnetii isolates.</title>
        <authorList>
            <person name="Seshadri R."/>
            <person name="Samuel J.E."/>
        </authorList>
    </citation>
    <scope>NUCLEOTIDE SEQUENCE [LARGE SCALE GENOMIC DNA]</scope>
    <source>
        <strain>RSA 331 / Henzerling II</strain>
    </source>
</reference>
<evidence type="ECO:0000255" key="1">
    <source>
        <dbReference type="HAMAP-Rule" id="MF_00386"/>
    </source>
</evidence>
<sequence length="88" mass="9923">MYKQIVHAIGKAIQTLLLGLIKSYRYLISPVLMSSCRFYPSCSCYAETALKRFGVIKGSGLTVWRLLRCHPFHPGGVDFVPEKSNEMV</sequence>
<comment type="function">
    <text evidence="1">Could be involved in insertion of integral membrane proteins into the membrane.</text>
</comment>
<comment type="subcellular location">
    <subcellularLocation>
        <location evidence="1">Cell inner membrane</location>
        <topology evidence="1">Peripheral membrane protein</topology>
        <orientation evidence="1">Cytoplasmic side</orientation>
    </subcellularLocation>
</comment>
<comment type="similarity">
    <text evidence="1">Belongs to the UPF0161 family.</text>
</comment>
<accession>A9NBA4</accession>
<gene>
    <name type="ordered locus">COXBURSA331_A2121</name>
</gene>
<organism>
    <name type="scientific">Coxiella burnetii (strain RSA 331 / Henzerling II)</name>
    <dbReference type="NCBI Taxonomy" id="360115"/>
    <lineage>
        <taxon>Bacteria</taxon>
        <taxon>Pseudomonadati</taxon>
        <taxon>Pseudomonadota</taxon>
        <taxon>Gammaproteobacteria</taxon>
        <taxon>Legionellales</taxon>
        <taxon>Coxiellaceae</taxon>
        <taxon>Coxiella</taxon>
    </lineage>
</organism>